<gene>
    <name type="primary">nte1</name>
    <name type="ORF">NFIA_030460</name>
</gene>
<sequence>MADGVTLVDSTGLHSFSSSPSLSTSSSSLTAVALSLATSASAVTASYSISHLPPPPLPPVPTTMAGWIGWVFSFFFQVIPSVLYWVITFSTITLPTWLFTLFSMSLTFTMNFTTLLLIVLAMVSTISWFIRYRFLNMYSRLPPEPQRKEPQVDLFPDVQEGDSKPGLANYLDEFLSAIKVFGYLERPVFHELTRTMQTRKLIAGETLMLEEEKGFCLVVDGLVQIFVKSMRDGKSDTDEELHHLGAESSDEEHHIDGKQGYQLLTEVKNGASMSSLFSILSLFTEDIQLRENESSGSSSSSIALRAARVPNSIPTSPRGVMDSPSLGFQDHSDDTSNMITNGDLPSVPPLHLGESHTPPSGDQHHQQHHESRKHSSRKRRKSVHPDIVARAMVDTTIAIIPASAFRRLTRVYPRATAHIVQVILTRLQRVTFATAHSYLGLSNEVLGIEKQMTKFTTYDLPNNMRGAALDRLKDKFIKERDRLGSEEVTKGIALHNPSAGRRRRSSSFLRKDAALQVKMMTPRRAATVVTPESAPAEHDTYGVSPGDLLSTIQSSRFGPRYEQPPAKLQSPLAEKENTHFRLPAMQARHTFRRQDTMDEDALFRECILDCIMKGIGLTSSTRDALRKSSHSGDASPKLLSYDSRRQKAIFTNNAFGFIDPYEGSGDGETESLMSMSVTSAGGTSPVINLREELRNDIEIVYFPKGSVLVEQGERHPGLYYVIDGFLDVGVPIVEKGEDLVGVSKPAASKESFPTLKRTTTANSIGAGGTAANDSRRRKQSRKSLYLIKPGGIQGYVGAVASYRSYTDVVAKTDVYVGFLPRASLERIAERYPIALLTLAKRLTSILPRLLLHIDFALEWLQVNAGQVIYHQGDESDAIYLVLNGRLRSVLESPGNKLAVIGEYGQGESVGELEVMTESTRPATLHAIRDTELAKFPRSLFNSLAQEHPGITIQVSKLIAQRMRDLVERPVTEKGVERSNAGGVQTATSTVNLRTVGILPVTAGVPVVEFGNRLLHALHQVGVTNGVTSLNQAAILNHLGRHAFSKMGKLKLSQYLADLEEKYGMVLYIADTNVSSPWTQTCITQADCILLVGLAESSPSIGEYERFLLGMKTTARKELVLLHSERYCPPGLTRRWLKNRVWINGGHHHIQMAFRLTAEPSHPETKRFGTVLKQRVQVLQAEIQKYTSRRIRQTPLYSAQSPFKGDFHRLARRLCGRAVGLVLGGGGARGIAHVGVIKALEEAGIPVDIIGGTSIGSFIGALYARDADVVPMYGRAKKFAGRMGSMWRFALDLTYPTVSYTTGHEFNRGIFKTFGDSQIEDFWLEFYCNTTNISKSRPEYHSSGYVWRYVRASMSLAGLIPPICDEGSMLLDGGYIDNLTVDHMKGLGADVIFAVDVGSIDDNTPQVYGDSLSGFWSVFNRWNPFSSCPNPPTLSEIQARLAYVSSIDNLERAKNIPGCLYMRPPIDGYGTLEFGKFDEIYQVGYAFGKQFLEKLKTEGSLPLPEETEEKKKLQRTMAPRRASI</sequence>
<organism>
    <name type="scientific">Neosartorya fischeri (strain ATCC 1020 / DSM 3700 / CBS 544.65 / FGSC A1164 / JCM 1740 / NRRL 181 / WB 181)</name>
    <name type="common">Aspergillus fischerianus</name>
    <dbReference type="NCBI Taxonomy" id="331117"/>
    <lineage>
        <taxon>Eukaryota</taxon>
        <taxon>Fungi</taxon>
        <taxon>Dikarya</taxon>
        <taxon>Ascomycota</taxon>
        <taxon>Pezizomycotina</taxon>
        <taxon>Eurotiomycetes</taxon>
        <taxon>Eurotiomycetidae</taxon>
        <taxon>Eurotiales</taxon>
        <taxon>Aspergillaceae</taxon>
        <taxon>Aspergillus</taxon>
        <taxon>Aspergillus subgen. Fumigati</taxon>
    </lineage>
</organism>
<evidence type="ECO:0000250" key="1"/>
<evidence type="ECO:0000255" key="2"/>
<evidence type="ECO:0000255" key="3">
    <source>
        <dbReference type="PROSITE-ProRule" id="PRU01161"/>
    </source>
</evidence>
<evidence type="ECO:0000256" key="4">
    <source>
        <dbReference type="SAM" id="MobiDB-lite"/>
    </source>
</evidence>
<evidence type="ECO:0000305" key="5"/>
<protein>
    <recommendedName>
        <fullName>Lysophospholipase nte1</fullName>
        <ecNumber>3.1.1.5</ecNumber>
    </recommendedName>
    <alternativeName>
        <fullName>Intracellular phospholipase B</fullName>
    </alternativeName>
    <alternativeName>
        <fullName>Neuropathy target esterase homolog</fullName>
    </alternativeName>
</protein>
<accession>A1D9Y2</accession>
<name>NTE1_NEOFI</name>
<reference key="1">
    <citation type="journal article" date="2008" name="PLoS Genet.">
        <title>Genomic islands in the pathogenic filamentous fungus Aspergillus fumigatus.</title>
        <authorList>
            <person name="Fedorova N.D."/>
            <person name="Khaldi N."/>
            <person name="Joardar V.S."/>
            <person name="Maiti R."/>
            <person name="Amedeo P."/>
            <person name="Anderson M.J."/>
            <person name="Crabtree J."/>
            <person name="Silva J.C."/>
            <person name="Badger J.H."/>
            <person name="Albarraq A."/>
            <person name="Angiuoli S."/>
            <person name="Bussey H."/>
            <person name="Bowyer P."/>
            <person name="Cotty P.J."/>
            <person name="Dyer P.S."/>
            <person name="Egan A."/>
            <person name="Galens K."/>
            <person name="Fraser-Liggett C.M."/>
            <person name="Haas B.J."/>
            <person name="Inman J.M."/>
            <person name="Kent R."/>
            <person name="Lemieux S."/>
            <person name="Malavazi I."/>
            <person name="Orvis J."/>
            <person name="Roemer T."/>
            <person name="Ronning C.M."/>
            <person name="Sundaram J.P."/>
            <person name="Sutton G."/>
            <person name="Turner G."/>
            <person name="Venter J.C."/>
            <person name="White O.R."/>
            <person name="Whitty B.R."/>
            <person name="Youngman P."/>
            <person name="Wolfe K.H."/>
            <person name="Goldman G.H."/>
            <person name="Wortman J.R."/>
            <person name="Jiang B."/>
            <person name="Denning D.W."/>
            <person name="Nierman W.C."/>
        </authorList>
    </citation>
    <scope>NUCLEOTIDE SEQUENCE [LARGE SCALE GENOMIC DNA]</scope>
    <source>
        <strain>ATCC 1020 / DSM 3700 / CBS 544.65 / FGSC A1164 / JCM 1740 / NRRL 181 / WB 181</strain>
    </source>
</reference>
<keyword id="KW-0256">Endoplasmic reticulum</keyword>
<keyword id="KW-0378">Hydrolase</keyword>
<keyword id="KW-0442">Lipid degradation</keyword>
<keyword id="KW-0443">Lipid metabolism</keyword>
<keyword id="KW-0472">Membrane</keyword>
<keyword id="KW-1185">Reference proteome</keyword>
<keyword id="KW-0677">Repeat</keyword>
<keyword id="KW-0812">Transmembrane</keyword>
<keyword id="KW-1133">Transmembrane helix</keyword>
<comment type="function">
    <text evidence="1">Intracellular phospholipase B that catalyzes the double deacylation of phosphatidylcholine (PC) to glycerophosphocholine (GroPCho). Plays an important role in membrane lipid homeostasis. Responsible for the rapid PC turnover in response to inositol, elevated temperatures, or when choline is present in the growth medium (By similarity).</text>
</comment>
<comment type="catalytic activity">
    <reaction>
        <text>a 1-acyl-sn-glycero-3-phosphocholine + H2O = sn-glycerol 3-phosphocholine + a fatty acid + H(+)</text>
        <dbReference type="Rhea" id="RHEA:15177"/>
        <dbReference type="ChEBI" id="CHEBI:15377"/>
        <dbReference type="ChEBI" id="CHEBI:15378"/>
        <dbReference type="ChEBI" id="CHEBI:16870"/>
        <dbReference type="ChEBI" id="CHEBI:28868"/>
        <dbReference type="ChEBI" id="CHEBI:58168"/>
        <dbReference type="EC" id="3.1.1.5"/>
    </reaction>
</comment>
<comment type="activity regulation">
    <text evidence="1">Inhibited by organophosphorus esters.</text>
</comment>
<comment type="subcellular location">
    <subcellularLocation>
        <location evidence="1">Endoplasmic reticulum membrane</location>
        <topology evidence="1">Multi-pass membrane protein</topology>
    </subcellularLocation>
</comment>
<comment type="similarity">
    <text evidence="5">Belongs to the NTE family.</text>
</comment>
<comment type="sequence caution" evidence="5">
    <conflict type="erroneous initiation">
        <sequence resource="EMBL-CDS" id="EAW20613"/>
    </conflict>
</comment>
<feature type="chain" id="PRO_0000295325" description="Lysophospholipase nte1">
    <location>
        <begin position="1"/>
        <end position="1523"/>
    </location>
</feature>
<feature type="topological domain" description="Cytoplasmic" evidence="1">
    <location>
        <begin position="1"/>
        <end position="66"/>
    </location>
</feature>
<feature type="transmembrane region" description="Helical" evidence="2">
    <location>
        <begin position="67"/>
        <end position="87"/>
    </location>
</feature>
<feature type="topological domain" description="Lumenal" evidence="1">
    <location>
        <begin position="88"/>
        <end position="109"/>
    </location>
</feature>
<feature type="transmembrane region" description="Helical" evidence="2">
    <location>
        <begin position="110"/>
        <end position="130"/>
    </location>
</feature>
<feature type="topological domain" description="Cytoplasmic" evidence="1">
    <location>
        <begin position="131"/>
        <end position="1523"/>
    </location>
</feature>
<feature type="domain" description="PNPLA" evidence="3">
    <location>
        <begin position="1220"/>
        <end position="1384"/>
    </location>
</feature>
<feature type="region of interest" description="Disordered" evidence="4">
    <location>
        <begin position="309"/>
        <end position="384"/>
    </location>
</feature>
<feature type="region of interest" description="Disordered" evidence="4">
    <location>
        <begin position="524"/>
        <end position="545"/>
    </location>
</feature>
<feature type="region of interest" description="Disordered" evidence="4">
    <location>
        <begin position="1502"/>
        <end position="1523"/>
    </location>
</feature>
<feature type="short sequence motif" description="GXGXXG" evidence="3">
    <location>
        <begin position="1224"/>
        <end position="1229"/>
    </location>
</feature>
<feature type="short sequence motif" description="GXSXG" evidence="3">
    <location>
        <begin position="1251"/>
        <end position="1255"/>
    </location>
</feature>
<feature type="short sequence motif" description="DGA/G" evidence="3">
    <location>
        <begin position="1371"/>
        <end position="1373"/>
    </location>
</feature>
<feature type="compositionally biased region" description="Basic residues" evidence="4">
    <location>
        <begin position="370"/>
        <end position="382"/>
    </location>
</feature>
<feature type="active site" description="Nucleophile" evidence="3">
    <location>
        <position position="1253"/>
    </location>
</feature>
<feature type="active site" description="Proton acceptor" evidence="3">
    <location>
        <position position="1371"/>
    </location>
</feature>
<feature type="binding site">
    <location>
        <begin position="681"/>
        <end position="800"/>
    </location>
    <ligand>
        <name>a nucleoside 3',5'-cyclic phosphate</name>
        <dbReference type="ChEBI" id="CHEBI:58464"/>
        <label>1</label>
    </ligand>
</feature>
<feature type="binding site">
    <location>
        <begin position="841"/>
        <end position="961"/>
    </location>
    <ligand>
        <name>a nucleoside 3',5'-cyclic phosphate</name>
        <dbReference type="ChEBI" id="CHEBI:58464"/>
        <label>2</label>
    </ligand>
</feature>
<dbReference type="EC" id="3.1.1.5"/>
<dbReference type="EMBL" id="DS027693">
    <property type="protein sequence ID" value="EAW20613.1"/>
    <property type="status" value="ALT_INIT"/>
    <property type="molecule type" value="Genomic_DNA"/>
</dbReference>
<dbReference type="RefSeq" id="XP_001262510.1">
    <property type="nucleotide sequence ID" value="XM_001262509.1"/>
</dbReference>
<dbReference type="SMR" id="A1D9Y2"/>
<dbReference type="STRING" id="331117.A1D9Y2"/>
<dbReference type="EnsemblFungi" id="EAW20613">
    <property type="protein sequence ID" value="EAW20613"/>
    <property type="gene ID" value="NFIA_030460"/>
</dbReference>
<dbReference type="GeneID" id="4588979"/>
<dbReference type="KEGG" id="nfi:NFIA_030460"/>
<dbReference type="VEuPathDB" id="FungiDB:NFIA_030460"/>
<dbReference type="eggNOG" id="KOG2968">
    <property type="taxonomic scope" value="Eukaryota"/>
</dbReference>
<dbReference type="OrthoDB" id="421051at2759"/>
<dbReference type="Proteomes" id="UP000006702">
    <property type="component" value="Unassembled WGS sequence"/>
</dbReference>
<dbReference type="GO" id="GO:0005789">
    <property type="term" value="C:endoplasmic reticulum membrane"/>
    <property type="evidence" value="ECO:0007669"/>
    <property type="project" value="UniProtKB-SubCell"/>
</dbReference>
<dbReference type="GO" id="GO:0004622">
    <property type="term" value="F:lysophospholipase activity"/>
    <property type="evidence" value="ECO:0007669"/>
    <property type="project" value="UniProtKB-EC"/>
</dbReference>
<dbReference type="GO" id="GO:0034638">
    <property type="term" value="P:phosphatidylcholine catabolic process"/>
    <property type="evidence" value="ECO:0007669"/>
    <property type="project" value="EnsemblFungi"/>
</dbReference>
<dbReference type="GO" id="GO:0071071">
    <property type="term" value="P:regulation of phospholipid biosynthetic process"/>
    <property type="evidence" value="ECO:0007669"/>
    <property type="project" value="EnsemblFungi"/>
</dbReference>
<dbReference type="CDD" id="cd00038">
    <property type="entry name" value="CAP_ED"/>
    <property type="match status" value="2"/>
</dbReference>
<dbReference type="FunFam" id="2.60.120.10:FF:000062">
    <property type="entry name" value="Lysophospholipase NTE1"/>
    <property type="match status" value="1"/>
</dbReference>
<dbReference type="FunFam" id="3.40.1090.10:FF:000007">
    <property type="entry name" value="Lysophospholipase NTE1"/>
    <property type="match status" value="1"/>
</dbReference>
<dbReference type="FunFam" id="3.40.1090.10:FF:000013">
    <property type="entry name" value="Lysophospholipase NTE1"/>
    <property type="match status" value="1"/>
</dbReference>
<dbReference type="Gene3D" id="3.40.1090.10">
    <property type="entry name" value="Cytosolic phospholipase A2 catalytic domain"/>
    <property type="match status" value="2"/>
</dbReference>
<dbReference type="Gene3D" id="2.60.120.10">
    <property type="entry name" value="Jelly Rolls"/>
    <property type="match status" value="3"/>
</dbReference>
<dbReference type="InterPro" id="IPR016035">
    <property type="entry name" value="Acyl_Trfase/lysoPLipase"/>
</dbReference>
<dbReference type="InterPro" id="IPR000595">
    <property type="entry name" value="cNMP-bd_dom"/>
</dbReference>
<dbReference type="InterPro" id="IPR018490">
    <property type="entry name" value="cNMP-bd_dom_sf"/>
</dbReference>
<dbReference type="InterPro" id="IPR001423">
    <property type="entry name" value="LysoPLipase_patatin_CS"/>
</dbReference>
<dbReference type="InterPro" id="IPR050301">
    <property type="entry name" value="NTE"/>
</dbReference>
<dbReference type="InterPro" id="IPR056556">
    <property type="entry name" value="NTE1_P-loop_dom"/>
</dbReference>
<dbReference type="InterPro" id="IPR002641">
    <property type="entry name" value="PNPLA_dom"/>
</dbReference>
<dbReference type="InterPro" id="IPR014710">
    <property type="entry name" value="RmlC-like_jellyroll"/>
</dbReference>
<dbReference type="PANTHER" id="PTHR14226:SF29">
    <property type="entry name" value="NEUROPATHY TARGET ESTERASE SWS"/>
    <property type="match status" value="1"/>
</dbReference>
<dbReference type="PANTHER" id="PTHR14226">
    <property type="entry name" value="NEUROPATHY TARGET ESTERASE/SWISS CHEESE D.MELANOGASTER"/>
    <property type="match status" value="1"/>
</dbReference>
<dbReference type="Pfam" id="PF00027">
    <property type="entry name" value="cNMP_binding"/>
    <property type="match status" value="1"/>
</dbReference>
<dbReference type="Pfam" id="PF24179">
    <property type="entry name" value="NTE_Ploop"/>
    <property type="match status" value="1"/>
</dbReference>
<dbReference type="Pfam" id="PF01734">
    <property type="entry name" value="Patatin"/>
    <property type="match status" value="1"/>
</dbReference>
<dbReference type="SMART" id="SM00100">
    <property type="entry name" value="cNMP"/>
    <property type="match status" value="1"/>
</dbReference>
<dbReference type="SUPFAM" id="SSF51206">
    <property type="entry name" value="cAMP-binding domain-like"/>
    <property type="match status" value="3"/>
</dbReference>
<dbReference type="SUPFAM" id="SSF52151">
    <property type="entry name" value="FabD/lysophospholipase-like"/>
    <property type="match status" value="1"/>
</dbReference>
<dbReference type="PROSITE" id="PS50042">
    <property type="entry name" value="CNMP_BINDING_3"/>
    <property type="match status" value="2"/>
</dbReference>
<dbReference type="PROSITE" id="PS51635">
    <property type="entry name" value="PNPLA"/>
    <property type="match status" value="1"/>
</dbReference>
<dbReference type="PROSITE" id="PS01237">
    <property type="entry name" value="UPF0028"/>
    <property type="match status" value="1"/>
</dbReference>
<proteinExistence type="inferred from homology"/>